<protein>
    <recommendedName>
        <fullName evidence="1">Isoprenyl transferase</fullName>
        <ecNumber evidence="1">2.5.1.-</ecNumber>
    </recommendedName>
</protein>
<evidence type="ECO:0000255" key="1">
    <source>
        <dbReference type="HAMAP-Rule" id="MF_01139"/>
    </source>
</evidence>
<comment type="function">
    <text evidence="1">Catalyzes the condensation of isopentenyl diphosphate (IPP) with allylic pyrophosphates generating different type of terpenoids.</text>
</comment>
<comment type="cofactor">
    <cofactor evidence="1">
        <name>Mg(2+)</name>
        <dbReference type="ChEBI" id="CHEBI:18420"/>
    </cofactor>
    <text evidence="1">Binds 2 magnesium ions per subunit.</text>
</comment>
<comment type="subunit">
    <text evidence="1">Homodimer.</text>
</comment>
<comment type="similarity">
    <text evidence="1">Belongs to the UPP synthase family.</text>
</comment>
<feature type="chain" id="PRO_0000123593" description="Isoprenyl transferase">
    <location>
        <begin position="1"/>
        <end position="253"/>
    </location>
</feature>
<feature type="active site" evidence="1">
    <location>
        <position position="30"/>
    </location>
</feature>
<feature type="active site" description="Proton acceptor" evidence="1">
    <location>
        <position position="82"/>
    </location>
</feature>
<feature type="binding site" evidence="1">
    <location>
        <position position="30"/>
    </location>
    <ligand>
        <name>Mg(2+)</name>
        <dbReference type="ChEBI" id="CHEBI:18420"/>
    </ligand>
</feature>
<feature type="binding site" evidence="1">
    <location>
        <begin position="31"/>
        <end position="34"/>
    </location>
    <ligand>
        <name>substrate</name>
    </ligand>
</feature>
<feature type="binding site" evidence="1">
    <location>
        <position position="35"/>
    </location>
    <ligand>
        <name>substrate</name>
    </ligand>
</feature>
<feature type="binding site" evidence="1">
    <location>
        <position position="51"/>
    </location>
    <ligand>
        <name>substrate</name>
    </ligand>
</feature>
<feature type="binding site" evidence="1">
    <location>
        <begin position="79"/>
        <end position="81"/>
    </location>
    <ligand>
        <name>substrate</name>
    </ligand>
</feature>
<feature type="binding site" evidence="1">
    <location>
        <position position="83"/>
    </location>
    <ligand>
        <name>substrate</name>
    </ligand>
</feature>
<feature type="binding site" evidence="1">
    <location>
        <position position="85"/>
    </location>
    <ligand>
        <name>substrate</name>
    </ligand>
</feature>
<feature type="binding site" evidence="1">
    <location>
        <position position="202"/>
    </location>
    <ligand>
        <name>substrate</name>
    </ligand>
</feature>
<feature type="binding site" evidence="1">
    <location>
        <begin position="208"/>
        <end position="210"/>
    </location>
    <ligand>
        <name>substrate</name>
    </ligand>
</feature>
<feature type="binding site" evidence="1">
    <location>
        <position position="221"/>
    </location>
    <ligand>
        <name>Mg(2+)</name>
        <dbReference type="ChEBI" id="CHEBI:18420"/>
    </ligand>
</feature>
<sequence length="253" mass="28855">MSLALEQANPIQENFLREPPLPKHIAIIMDGNRRWQKKHEQFCKSNAISGHRRGADSIPQIVDTAALLGVEALTLFAFSTENFSRSKTEVAELFSLFNSQLHSKLSFLHDREIRLRCIGDLSKLPQELQNNIAKAVSATTHYSHMELIFAINYGSKNELVRAFKELHQDLTNKKISINEISEELISSYLDTSGLPDPDLLIRTGGEMRVSNFLLWQIAYTELYVTDVLWPDFTAHDLLEAIKTYQQRSRRGGK</sequence>
<organism>
    <name type="scientific">Chlamydia muridarum (strain MoPn / Nigg)</name>
    <dbReference type="NCBI Taxonomy" id="243161"/>
    <lineage>
        <taxon>Bacteria</taxon>
        <taxon>Pseudomonadati</taxon>
        <taxon>Chlamydiota</taxon>
        <taxon>Chlamydiia</taxon>
        <taxon>Chlamydiales</taxon>
        <taxon>Chlamydiaceae</taxon>
        <taxon>Chlamydia/Chlamydophila group</taxon>
        <taxon>Chlamydia</taxon>
    </lineage>
</organism>
<reference key="1">
    <citation type="journal article" date="2000" name="Nucleic Acids Res.">
        <title>Genome sequences of Chlamydia trachomatis MoPn and Chlamydia pneumoniae AR39.</title>
        <authorList>
            <person name="Read T.D."/>
            <person name="Brunham R.C."/>
            <person name="Shen C."/>
            <person name="Gill S.R."/>
            <person name="Heidelberg J.F."/>
            <person name="White O."/>
            <person name="Hickey E.K."/>
            <person name="Peterson J.D."/>
            <person name="Utterback T.R."/>
            <person name="Berry K.J."/>
            <person name="Bass S."/>
            <person name="Linher K.D."/>
            <person name="Weidman J.F."/>
            <person name="Khouri H.M."/>
            <person name="Craven B."/>
            <person name="Bowman C."/>
            <person name="Dodson R.J."/>
            <person name="Gwinn M.L."/>
            <person name="Nelson W.C."/>
            <person name="DeBoy R.T."/>
            <person name="Kolonay J.F."/>
            <person name="McClarty G."/>
            <person name="Salzberg S.L."/>
            <person name="Eisen J.A."/>
            <person name="Fraser C.M."/>
        </authorList>
    </citation>
    <scope>NUCLEOTIDE SEQUENCE [LARGE SCALE GENOMIC DNA]</scope>
    <source>
        <strain>MoPn / Nigg</strain>
    </source>
</reference>
<gene>
    <name evidence="1" type="primary">uppS</name>
    <name type="ordered locus">TC_0735</name>
</gene>
<dbReference type="EC" id="2.5.1.-" evidence="1"/>
<dbReference type="EMBL" id="AE002160">
    <property type="protein sequence ID" value="AAF39545.1"/>
    <property type="molecule type" value="Genomic_DNA"/>
</dbReference>
<dbReference type="PIR" id="C81670">
    <property type="entry name" value="C81670"/>
</dbReference>
<dbReference type="RefSeq" id="WP_010231376.1">
    <property type="nucleotide sequence ID" value="NZ_CP063055.1"/>
</dbReference>
<dbReference type="SMR" id="Q9PJU2"/>
<dbReference type="GeneID" id="1246098"/>
<dbReference type="KEGG" id="cmu:TC_0735"/>
<dbReference type="eggNOG" id="COG0020">
    <property type="taxonomic scope" value="Bacteria"/>
</dbReference>
<dbReference type="HOGENOM" id="CLU_038505_1_1_0"/>
<dbReference type="OrthoDB" id="4191603at2"/>
<dbReference type="Proteomes" id="UP000000800">
    <property type="component" value="Chromosome"/>
</dbReference>
<dbReference type="GO" id="GO:0045547">
    <property type="term" value="F:ditrans,polycis-polyprenyl diphosphate synthase [(2E,6E)-farnesyl diphosphate specific] activity"/>
    <property type="evidence" value="ECO:0007669"/>
    <property type="project" value="TreeGrafter"/>
</dbReference>
<dbReference type="GO" id="GO:0000287">
    <property type="term" value="F:magnesium ion binding"/>
    <property type="evidence" value="ECO:0007669"/>
    <property type="project" value="UniProtKB-UniRule"/>
</dbReference>
<dbReference type="GO" id="GO:0016094">
    <property type="term" value="P:polyprenol biosynthetic process"/>
    <property type="evidence" value="ECO:0007669"/>
    <property type="project" value="TreeGrafter"/>
</dbReference>
<dbReference type="CDD" id="cd00475">
    <property type="entry name" value="Cis_IPPS"/>
    <property type="match status" value="1"/>
</dbReference>
<dbReference type="FunFam" id="3.40.1180.10:FF:000003">
    <property type="entry name" value="Isoprenyl transferase 2"/>
    <property type="match status" value="1"/>
</dbReference>
<dbReference type="Gene3D" id="3.40.1180.10">
    <property type="entry name" value="Decaprenyl diphosphate synthase-like"/>
    <property type="match status" value="1"/>
</dbReference>
<dbReference type="HAMAP" id="MF_01139">
    <property type="entry name" value="ISPT"/>
    <property type="match status" value="1"/>
</dbReference>
<dbReference type="InterPro" id="IPR001441">
    <property type="entry name" value="UPP_synth-like"/>
</dbReference>
<dbReference type="InterPro" id="IPR018520">
    <property type="entry name" value="UPP_synth-like_CS"/>
</dbReference>
<dbReference type="InterPro" id="IPR036424">
    <property type="entry name" value="UPP_synth-like_sf"/>
</dbReference>
<dbReference type="NCBIfam" id="NF011413">
    <property type="entry name" value="PRK14840.1"/>
    <property type="match status" value="1"/>
</dbReference>
<dbReference type="NCBIfam" id="TIGR00055">
    <property type="entry name" value="uppS"/>
    <property type="match status" value="1"/>
</dbReference>
<dbReference type="PANTHER" id="PTHR10291:SF0">
    <property type="entry name" value="DEHYDRODOLICHYL DIPHOSPHATE SYNTHASE 2"/>
    <property type="match status" value="1"/>
</dbReference>
<dbReference type="PANTHER" id="PTHR10291">
    <property type="entry name" value="DEHYDRODOLICHYL DIPHOSPHATE SYNTHASE FAMILY MEMBER"/>
    <property type="match status" value="1"/>
</dbReference>
<dbReference type="Pfam" id="PF01255">
    <property type="entry name" value="Prenyltransf"/>
    <property type="match status" value="1"/>
</dbReference>
<dbReference type="SUPFAM" id="SSF64005">
    <property type="entry name" value="Undecaprenyl diphosphate synthase"/>
    <property type="match status" value="1"/>
</dbReference>
<dbReference type="PROSITE" id="PS01066">
    <property type="entry name" value="UPP_SYNTHASE"/>
    <property type="match status" value="1"/>
</dbReference>
<keyword id="KW-0460">Magnesium</keyword>
<keyword id="KW-0479">Metal-binding</keyword>
<keyword id="KW-0808">Transferase</keyword>
<name>ISPT_CHLMU</name>
<proteinExistence type="inferred from homology"/>
<accession>Q9PJU2</accession>